<reference key="1">
    <citation type="journal article" date="2008" name="FEMS Immunol. Med. Microbiol.">
        <title>Evaluating Burkholderia pseudomallei Bip proteins as vaccines and Bip antibodies as detection agents.</title>
        <authorList>
            <person name="Druar C."/>
            <person name="Yu F."/>
            <person name="Barnes J.L."/>
            <person name="Okinaka R.T."/>
            <person name="Chantratita N."/>
            <person name="Beg S."/>
            <person name="Stratilo C.W."/>
            <person name="Olive A.J."/>
            <person name="Soltes G."/>
            <person name="Russell M.L."/>
            <person name="Limmathurotsakul D."/>
            <person name="Norton R.E."/>
            <person name="Ni S.X."/>
            <person name="Picking W.D."/>
            <person name="Jackson P.J."/>
            <person name="Stewart D.I.H."/>
            <person name="Tsvetnitsky V."/>
            <person name="Picking W.L."/>
            <person name="Cherwonogrodzky J.W."/>
            <person name="Ketheesan N."/>
            <person name="Peacock S.J."/>
            <person name="Wiersma E.J."/>
        </authorList>
    </citation>
    <scope>NUCLEOTIDE SEQUENCE [GENOMIC DNA]</scope>
    <scope>IMMUNOGENICITY</scope>
    <source>
        <strain>K96243</strain>
        <strain>PHLS 79</strain>
        <strain>PHLS 91</strain>
    </source>
</reference>
<reference key="2">
    <citation type="journal article" date="2004" name="Proc. Natl. Acad. Sci. U.S.A.">
        <title>Genomic plasticity of the causative agent of melioidosis, Burkholderia pseudomallei.</title>
        <authorList>
            <person name="Holden M.T.G."/>
            <person name="Titball R.W."/>
            <person name="Peacock S.J."/>
            <person name="Cerdeno-Tarraga A.-M."/>
            <person name="Atkins T."/>
            <person name="Crossman L.C."/>
            <person name="Pitt T."/>
            <person name="Churcher C."/>
            <person name="Mungall K.L."/>
            <person name="Bentley S.D."/>
            <person name="Sebaihia M."/>
            <person name="Thomson N.R."/>
            <person name="Bason N."/>
            <person name="Beacham I.R."/>
            <person name="Brooks K."/>
            <person name="Brown K.A."/>
            <person name="Brown N.F."/>
            <person name="Challis G.L."/>
            <person name="Cherevach I."/>
            <person name="Chillingworth T."/>
            <person name="Cronin A."/>
            <person name="Crossett B."/>
            <person name="Davis P."/>
            <person name="DeShazer D."/>
            <person name="Feltwell T."/>
            <person name="Fraser A."/>
            <person name="Hance Z."/>
            <person name="Hauser H."/>
            <person name="Holroyd S."/>
            <person name="Jagels K."/>
            <person name="Keith K.E."/>
            <person name="Maddison M."/>
            <person name="Moule S."/>
            <person name="Price C."/>
            <person name="Quail M.A."/>
            <person name="Rabbinowitsch E."/>
            <person name="Rutherford K."/>
            <person name="Sanders M."/>
            <person name="Simmonds M."/>
            <person name="Songsivilai S."/>
            <person name="Stevens K."/>
            <person name="Tumapa S."/>
            <person name="Vesaratchavest M."/>
            <person name="Whitehead S."/>
            <person name="Yeats C."/>
            <person name="Barrell B.G."/>
            <person name="Oyston P.C.F."/>
            <person name="Parkhill J."/>
        </authorList>
    </citation>
    <scope>NUCLEOTIDE SEQUENCE [LARGE SCALE GENOMIC DNA]</scope>
    <source>
        <strain>K96243</strain>
    </source>
</reference>
<organism>
    <name type="scientific">Burkholderia pseudomallei (strain K96243)</name>
    <dbReference type="NCBI Taxonomy" id="272560"/>
    <lineage>
        <taxon>Bacteria</taxon>
        <taxon>Pseudomonadati</taxon>
        <taxon>Pseudomonadota</taxon>
        <taxon>Betaproteobacteria</taxon>
        <taxon>Burkholderiales</taxon>
        <taxon>Burkholderiaceae</taxon>
        <taxon>Burkholderia</taxon>
        <taxon>pseudomallei group</taxon>
    </lineage>
</organism>
<keyword id="KW-1185">Reference proteome</keyword>
<keyword id="KW-0964">Secreted</keyword>
<keyword id="KW-0843">Virulence</keyword>
<evidence type="ECO:0000256" key="1">
    <source>
        <dbReference type="SAM" id="MobiDB-lite"/>
    </source>
</evidence>
<evidence type="ECO:0000305" key="2"/>
<gene>
    <name type="primary">bipC</name>
    <name type="ordered locus">BPSS1531</name>
</gene>
<proteinExistence type="inferred from homology"/>
<comment type="subcellular location">
    <subcellularLocation>
        <location evidence="2">Secreted</location>
    </subcellularLocation>
    <text>Secreted via the bsa type III secretion system.</text>
</comment>
<comment type="miscellaneous">
    <text>Human meliodoisis patients have detectable antibody response to BipC. However, BipC does not act as a protective antigen.</text>
</comment>
<comment type="similarity">
    <text evidence="2">Belongs to the SctB/SipC family.</text>
</comment>
<dbReference type="EMBL" id="EF428329">
    <property type="protein sequence ID" value="ABO26349.1"/>
    <property type="molecule type" value="Genomic_DNA"/>
</dbReference>
<dbReference type="EMBL" id="EF428332">
    <property type="protein sequence ID" value="ABO26355.1"/>
    <property type="molecule type" value="Genomic_DNA"/>
</dbReference>
<dbReference type="EMBL" id="EF436254">
    <property type="protein sequence ID" value="ABO28815.1"/>
    <property type="molecule type" value="Genomic_DNA"/>
</dbReference>
<dbReference type="EMBL" id="BX571966">
    <property type="protein sequence ID" value="CAH39004.1"/>
    <property type="molecule type" value="Genomic_DNA"/>
</dbReference>
<dbReference type="RefSeq" id="WP_004203135.1">
    <property type="nucleotide sequence ID" value="NZ_CP009537.1"/>
</dbReference>
<dbReference type="RefSeq" id="YP_111537.1">
    <property type="nucleotide sequence ID" value="NC_006351.1"/>
</dbReference>
<dbReference type="STRING" id="272560.BPSS1531"/>
<dbReference type="GeneID" id="92975830"/>
<dbReference type="KEGG" id="bps:BPSS1531"/>
<dbReference type="PATRIC" id="fig|272560.51.peg.4886"/>
<dbReference type="PHI-base" id="PHI:5321"/>
<dbReference type="PHI-base" id="PHI:7309"/>
<dbReference type="Proteomes" id="UP000000605">
    <property type="component" value="Chromosome 2"/>
</dbReference>
<dbReference type="GO" id="GO:0005576">
    <property type="term" value="C:extracellular region"/>
    <property type="evidence" value="ECO:0007669"/>
    <property type="project" value="UniProtKB-SubCell"/>
</dbReference>
<dbReference type="InterPro" id="IPR005427">
    <property type="entry name" value="BipC/SctB"/>
</dbReference>
<dbReference type="NCBIfam" id="TIGR02101">
    <property type="entry name" value="IpaC_SipC"/>
    <property type="match status" value="1"/>
</dbReference>
<dbReference type="Pfam" id="PF09599">
    <property type="entry name" value="IpaC_SipC"/>
    <property type="match status" value="1"/>
</dbReference>
<dbReference type="PRINTS" id="PR01608">
    <property type="entry name" value="BACINVASINC"/>
</dbReference>
<protein>
    <recommendedName>
        <fullName>Effector protein BipC</fullName>
    </recommendedName>
</protein>
<sequence length="419" mass="44323">MSIGVQSSGINISHAELSRLVDAGKSEQGDKAVRDDGRALARADAALAAVVGERVAARRDAVAGSGAQRVELARPKPDAQTRATDRRTVSGLEREHKRLAASQTPRVTGMHDALVQRHVSLDGAKAAHGEGVKRAAGDAPRAAADAPQRFAFADDKAFDAMLALGAAMQKNVQSDLAMQGKLTMLAHDAMMSAAAQDRSIGAAQMTAAIAGGALQATTSLGGAMQQMKSLSTKSMSIEKELKPQAELKQFHAEQALELRGINKPVLSNDEVSHVKIKRDTGETVRHEIDHGGERMSDEHASVLAQEAPARQHRIDMHGMRHEENLVKAGRQQMKGDLLQSGGQIGKNQIDGASAQQQGADRAEQKEDENAQQTAMAAASTRDEAAHRSREAAQKAIDAAKSQVANDNAVAAQVAGNLRT</sequence>
<feature type="chain" id="PRO_0000344001" description="Effector protein BipC">
    <location>
        <begin position="1"/>
        <end position="419"/>
    </location>
</feature>
<feature type="region of interest" description="Disordered" evidence="1">
    <location>
        <begin position="62"/>
        <end position="91"/>
    </location>
</feature>
<feature type="region of interest" description="Disordered" evidence="1">
    <location>
        <begin position="338"/>
        <end position="402"/>
    </location>
</feature>
<feature type="compositionally biased region" description="Basic and acidic residues" evidence="1">
    <location>
        <begin position="71"/>
        <end position="91"/>
    </location>
</feature>
<feature type="compositionally biased region" description="Basic and acidic residues" evidence="1">
    <location>
        <begin position="380"/>
        <end position="392"/>
    </location>
</feature>
<name>BIPC_BURPS</name>
<accession>Q63K35</accession>